<keyword id="KW-1185">Reference proteome</keyword>
<keyword id="KW-0687">Ribonucleoprotein</keyword>
<keyword id="KW-0689">Ribosomal protein</keyword>
<keyword id="KW-0694">RNA-binding</keyword>
<keyword id="KW-0699">rRNA-binding</keyword>
<protein>
    <recommendedName>
        <fullName evidence="1">Large ribosomal subunit protein bL20</fullName>
    </recommendedName>
    <alternativeName>
        <fullName evidence="2">50S ribosomal protein L20</fullName>
    </alternativeName>
</protein>
<organism>
    <name type="scientific">Prochlorococcus marinus (strain SARG / CCMP1375 / SS120)</name>
    <dbReference type="NCBI Taxonomy" id="167539"/>
    <lineage>
        <taxon>Bacteria</taxon>
        <taxon>Bacillati</taxon>
        <taxon>Cyanobacteriota</taxon>
        <taxon>Cyanophyceae</taxon>
        <taxon>Synechococcales</taxon>
        <taxon>Prochlorococcaceae</taxon>
        <taxon>Prochlorococcus</taxon>
    </lineage>
</organism>
<name>RL20_PROMA</name>
<sequence>MSRVKRGNVARKRRNKILRLAKGFQGSNGSLFRTANQRVMKALCNAYRDRKRRKRDFRRLWIARINAAARMNGMSYSKLIGNLKKADIRINRKMLAQIAILDPTNFQKVVADVKK</sequence>
<accession>Q7V9L1</accession>
<proteinExistence type="inferred from homology"/>
<comment type="function">
    <text evidence="1">Binds directly to 23S ribosomal RNA and is necessary for the in vitro assembly process of the 50S ribosomal subunit. It is not involved in the protein synthesizing functions of that subunit.</text>
</comment>
<comment type="similarity">
    <text evidence="1">Belongs to the bacterial ribosomal protein bL20 family.</text>
</comment>
<gene>
    <name evidence="1" type="primary">rplT</name>
    <name evidence="1" type="synonym">rpl20</name>
    <name type="ordered locus">Pro_1822</name>
</gene>
<dbReference type="EMBL" id="AE017126">
    <property type="protein sequence ID" value="AAQ00866.1"/>
    <property type="molecule type" value="Genomic_DNA"/>
</dbReference>
<dbReference type="RefSeq" id="NP_876213.1">
    <property type="nucleotide sequence ID" value="NC_005042.1"/>
</dbReference>
<dbReference type="RefSeq" id="WP_011125971.1">
    <property type="nucleotide sequence ID" value="NC_005042.1"/>
</dbReference>
<dbReference type="SMR" id="Q7V9L1"/>
<dbReference type="STRING" id="167539.Pro_1822"/>
<dbReference type="EnsemblBacteria" id="AAQ00866">
    <property type="protein sequence ID" value="AAQ00866"/>
    <property type="gene ID" value="Pro_1822"/>
</dbReference>
<dbReference type="KEGG" id="pma:Pro_1822"/>
<dbReference type="PATRIC" id="fig|167539.5.peg.1924"/>
<dbReference type="eggNOG" id="COG0292">
    <property type="taxonomic scope" value="Bacteria"/>
</dbReference>
<dbReference type="HOGENOM" id="CLU_123265_0_1_3"/>
<dbReference type="OrthoDB" id="9808966at2"/>
<dbReference type="Proteomes" id="UP000001420">
    <property type="component" value="Chromosome"/>
</dbReference>
<dbReference type="GO" id="GO:1990904">
    <property type="term" value="C:ribonucleoprotein complex"/>
    <property type="evidence" value="ECO:0007669"/>
    <property type="project" value="UniProtKB-KW"/>
</dbReference>
<dbReference type="GO" id="GO:0005840">
    <property type="term" value="C:ribosome"/>
    <property type="evidence" value="ECO:0007669"/>
    <property type="project" value="UniProtKB-KW"/>
</dbReference>
<dbReference type="GO" id="GO:0019843">
    <property type="term" value="F:rRNA binding"/>
    <property type="evidence" value="ECO:0007669"/>
    <property type="project" value="UniProtKB-UniRule"/>
</dbReference>
<dbReference type="GO" id="GO:0003735">
    <property type="term" value="F:structural constituent of ribosome"/>
    <property type="evidence" value="ECO:0007669"/>
    <property type="project" value="InterPro"/>
</dbReference>
<dbReference type="GO" id="GO:0000027">
    <property type="term" value="P:ribosomal large subunit assembly"/>
    <property type="evidence" value="ECO:0007669"/>
    <property type="project" value="UniProtKB-UniRule"/>
</dbReference>
<dbReference type="GO" id="GO:0006412">
    <property type="term" value="P:translation"/>
    <property type="evidence" value="ECO:0007669"/>
    <property type="project" value="InterPro"/>
</dbReference>
<dbReference type="CDD" id="cd07026">
    <property type="entry name" value="Ribosomal_L20"/>
    <property type="match status" value="1"/>
</dbReference>
<dbReference type="FunFam" id="1.10.1900.20:FF:000001">
    <property type="entry name" value="50S ribosomal protein L20"/>
    <property type="match status" value="1"/>
</dbReference>
<dbReference type="Gene3D" id="6.10.160.10">
    <property type="match status" value="1"/>
</dbReference>
<dbReference type="Gene3D" id="1.10.1900.20">
    <property type="entry name" value="Ribosomal protein L20"/>
    <property type="match status" value="1"/>
</dbReference>
<dbReference type="HAMAP" id="MF_00382">
    <property type="entry name" value="Ribosomal_bL20"/>
    <property type="match status" value="1"/>
</dbReference>
<dbReference type="InterPro" id="IPR005813">
    <property type="entry name" value="Ribosomal_bL20"/>
</dbReference>
<dbReference type="InterPro" id="IPR049946">
    <property type="entry name" value="RIBOSOMAL_L20_CS"/>
</dbReference>
<dbReference type="InterPro" id="IPR035566">
    <property type="entry name" value="Ribosomal_protein_bL20_C"/>
</dbReference>
<dbReference type="NCBIfam" id="TIGR01032">
    <property type="entry name" value="rplT_bact"/>
    <property type="match status" value="1"/>
</dbReference>
<dbReference type="PANTHER" id="PTHR10986">
    <property type="entry name" value="39S RIBOSOMAL PROTEIN L20"/>
    <property type="match status" value="1"/>
</dbReference>
<dbReference type="Pfam" id="PF00453">
    <property type="entry name" value="Ribosomal_L20"/>
    <property type="match status" value="1"/>
</dbReference>
<dbReference type="PRINTS" id="PR00062">
    <property type="entry name" value="RIBOSOMALL20"/>
</dbReference>
<dbReference type="SUPFAM" id="SSF74731">
    <property type="entry name" value="Ribosomal protein L20"/>
    <property type="match status" value="1"/>
</dbReference>
<dbReference type="PROSITE" id="PS00937">
    <property type="entry name" value="RIBOSOMAL_L20"/>
    <property type="match status" value="1"/>
</dbReference>
<feature type="chain" id="PRO_0000177203" description="Large ribosomal subunit protein bL20">
    <location>
        <begin position="1"/>
        <end position="115"/>
    </location>
</feature>
<reference key="1">
    <citation type="journal article" date="2003" name="Proc. Natl. Acad. Sci. U.S.A.">
        <title>Genome sequence of the cyanobacterium Prochlorococcus marinus SS120, a nearly minimal oxyphototrophic genome.</title>
        <authorList>
            <person name="Dufresne A."/>
            <person name="Salanoubat M."/>
            <person name="Partensky F."/>
            <person name="Artiguenave F."/>
            <person name="Axmann I.M."/>
            <person name="Barbe V."/>
            <person name="Duprat S."/>
            <person name="Galperin M.Y."/>
            <person name="Koonin E.V."/>
            <person name="Le Gall F."/>
            <person name="Makarova K.S."/>
            <person name="Ostrowski M."/>
            <person name="Oztas S."/>
            <person name="Robert C."/>
            <person name="Rogozin I.B."/>
            <person name="Scanlan D.J."/>
            <person name="Tandeau de Marsac N."/>
            <person name="Weissenbach J."/>
            <person name="Wincker P."/>
            <person name="Wolf Y.I."/>
            <person name="Hess W.R."/>
        </authorList>
    </citation>
    <scope>NUCLEOTIDE SEQUENCE [LARGE SCALE GENOMIC DNA]</scope>
    <source>
        <strain>SARG / CCMP1375 / SS120</strain>
    </source>
</reference>
<evidence type="ECO:0000255" key="1">
    <source>
        <dbReference type="HAMAP-Rule" id="MF_00382"/>
    </source>
</evidence>
<evidence type="ECO:0000305" key="2"/>